<comment type="catalytic activity">
    <reaction>
        <text>D-glucose + ATP = D-glucose 6-phosphate + ADP + H(+)</text>
        <dbReference type="Rhea" id="RHEA:17825"/>
        <dbReference type="ChEBI" id="CHEBI:4167"/>
        <dbReference type="ChEBI" id="CHEBI:15378"/>
        <dbReference type="ChEBI" id="CHEBI:30616"/>
        <dbReference type="ChEBI" id="CHEBI:61548"/>
        <dbReference type="ChEBI" id="CHEBI:456216"/>
        <dbReference type="EC" id="2.7.1.2"/>
    </reaction>
</comment>
<comment type="subcellular location">
    <subcellularLocation>
        <location evidence="1">Cytoplasm</location>
    </subcellularLocation>
</comment>
<comment type="similarity">
    <text evidence="2">Belongs to the ROK (NagC/XylR) family.</text>
</comment>
<evidence type="ECO:0000250" key="1"/>
<evidence type="ECO:0000305" key="2"/>
<proteinExistence type="inferred from homology"/>
<feature type="chain" id="PRO_0000095675" description="Glucokinase">
    <location>
        <begin position="1"/>
        <end position="330"/>
    </location>
</feature>
<dbReference type="EC" id="2.7.1.2"/>
<dbReference type="EMBL" id="BA000004">
    <property type="protein sequence ID" value="BAB05144.1"/>
    <property type="molecule type" value="Genomic_DNA"/>
</dbReference>
<dbReference type="PIR" id="A83828">
    <property type="entry name" value="A83828"/>
</dbReference>
<dbReference type="RefSeq" id="WP_010897590.1">
    <property type="nucleotide sequence ID" value="NC_002570.2"/>
</dbReference>
<dbReference type="SMR" id="Q9KCZ4"/>
<dbReference type="STRING" id="272558.gene:10727323"/>
<dbReference type="KEGG" id="bha:BH1425"/>
<dbReference type="eggNOG" id="COG1940">
    <property type="taxonomic scope" value="Bacteria"/>
</dbReference>
<dbReference type="HOGENOM" id="CLU_036604_0_1_9"/>
<dbReference type="OrthoDB" id="9810372at2"/>
<dbReference type="Proteomes" id="UP000001258">
    <property type="component" value="Chromosome"/>
</dbReference>
<dbReference type="GO" id="GO:0005737">
    <property type="term" value="C:cytoplasm"/>
    <property type="evidence" value="ECO:0007669"/>
    <property type="project" value="UniProtKB-SubCell"/>
</dbReference>
<dbReference type="GO" id="GO:0005524">
    <property type="term" value="F:ATP binding"/>
    <property type="evidence" value="ECO:0007669"/>
    <property type="project" value="UniProtKB-KW"/>
</dbReference>
<dbReference type="GO" id="GO:0004340">
    <property type="term" value="F:glucokinase activity"/>
    <property type="evidence" value="ECO:0007669"/>
    <property type="project" value="UniProtKB-EC"/>
</dbReference>
<dbReference type="GO" id="GO:0006096">
    <property type="term" value="P:glycolytic process"/>
    <property type="evidence" value="ECO:0007669"/>
    <property type="project" value="UniProtKB-KW"/>
</dbReference>
<dbReference type="CDD" id="cd24062">
    <property type="entry name" value="ASKHA_NBD_ROK_BsGLK-like"/>
    <property type="match status" value="1"/>
</dbReference>
<dbReference type="Gene3D" id="3.30.420.40">
    <property type="match status" value="2"/>
</dbReference>
<dbReference type="InterPro" id="IPR043129">
    <property type="entry name" value="ATPase_NBD"/>
</dbReference>
<dbReference type="InterPro" id="IPR000600">
    <property type="entry name" value="ROK"/>
</dbReference>
<dbReference type="InterPro" id="IPR049874">
    <property type="entry name" value="ROK_cs"/>
</dbReference>
<dbReference type="InterPro" id="IPR004654">
    <property type="entry name" value="ROK_glcA"/>
</dbReference>
<dbReference type="NCBIfam" id="TIGR00744">
    <property type="entry name" value="ROK_glcA_fam"/>
    <property type="match status" value="1"/>
</dbReference>
<dbReference type="PANTHER" id="PTHR18964:SF149">
    <property type="entry name" value="BIFUNCTIONAL UDP-N-ACETYLGLUCOSAMINE 2-EPIMERASE_N-ACETYLMANNOSAMINE KINASE"/>
    <property type="match status" value="1"/>
</dbReference>
<dbReference type="PANTHER" id="PTHR18964">
    <property type="entry name" value="ROK (REPRESSOR, ORF, KINASE) FAMILY"/>
    <property type="match status" value="1"/>
</dbReference>
<dbReference type="Pfam" id="PF00480">
    <property type="entry name" value="ROK"/>
    <property type="match status" value="1"/>
</dbReference>
<dbReference type="SUPFAM" id="SSF53067">
    <property type="entry name" value="Actin-like ATPase domain"/>
    <property type="match status" value="1"/>
</dbReference>
<dbReference type="PROSITE" id="PS01125">
    <property type="entry name" value="ROK"/>
    <property type="match status" value="1"/>
</dbReference>
<name>GLK_HALH5</name>
<keyword id="KW-0067">ATP-binding</keyword>
<keyword id="KW-0963">Cytoplasm</keyword>
<keyword id="KW-0324">Glycolysis</keyword>
<keyword id="KW-0418">Kinase</keyword>
<keyword id="KW-0547">Nucleotide-binding</keyword>
<keyword id="KW-1185">Reference proteome</keyword>
<keyword id="KW-0808">Transferase</keyword>
<accession>Q9KCZ4</accession>
<sequence>MSDRWYVGVDVGGTTIKMAFLTTAGEIVDKWEIPTNKQDGGALITTNIADALDKRLSGHHKSKSDLIGIGLGAPGFIEMDTGFIYHAVNIGWRDFPLKDKLEEETKLPVIVDNDANIAALGEMWKGAGDGAKNMLLITLGTGVGGGIVANGNILHGVNGMAGEIGHITVIPEGGAPCNCGKTGCLETVASATGIARIATEGVTEHKESQLALDYDKHGVLTAKDVFSAADASDAFALSVVDHIAYYLGFAIANLANALNPEKIVIGGGVSKAGDTLLKPIKQHFEAYALPRVADGAEFRIATLGNDAGVIGGGWLVKQQENSMEKGNETE</sequence>
<gene>
    <name type="primary">glcK</name>
    <name type="synonym">glk</name>
    <name type="ordered locus">BH1425</name>
</gene>
<organism>
    <name type="scientific">Halalkalibacterium halodurans (strain ATCC BAA-125 / DSM 18197 / FERM 7344 / JCM 9153 / C-125)</name>
    <name type="common">Bacillus halodurans</name>
    <dbReference type="NCBI Taxonomy" id="272558"/>
    <lineage>
        <taxon>Bacteria</taxon>
        <taxon>Bacillati</taxon>
        <taxon>Bacillota</taxon>
        <taxon>Bacilli</taxon>
        <taxon>Bacillales</taxon>
        <taxon>Bacillaceae</taxon>
        <taxon>Halalkalibacterium (ex Joshi et al. 2022)</taxon>
    </lineage>
</organism>
<reference key="1">
    <citation type="journal article" date="2000" name="Nucleic Acids Res.">
        <title>Complete genome sequence of the alkaliphilic bacterium Bacillus halodurans and genomic sequence comparison with Bacillus subtilis.</title>
        <authorList>
            <person name="Takami H."/>
            <person name="Nakasone K."/>
            <person name="Takaki Y."/>
            <person name="Maeno G."/>
            <person name="Sasaki R."/>
            <person name="Masui N."/>
            <person name="Fuji F."/>
            <person name="Hirama C."/>
            <person name="Nakamura Y."/>
            <person name="Ogasawara N."/>
            <person name="Kuhara S."/>
            <person name="Horikoshi K."/>
        </authorList>
    </citation>
    <scope>NUCLEOTIDE SEQUENCE [LARGE SCALE GENOMIC DNA]</scope>
    <source>
        <strain>ATCC BAA-125 / DSM 18197 / FERM 7344 / JCM 9153 / C-125</strain>
    </source>
</reference>
<protein>
    <recommendedName>
        <fullName>Glucokinase</fullName>
        <ecNumber>2.7.1.2</ecNumber>
    </recommendedName>
    <alternativeName>
        <fullName>Glucose kinase</fullName>
    </alternativeName>
</protein>